<accession>A0QKU6</accession>
<protein>
    <recommendedName>
        <fullName evidence="1">Small ribosomal subunit protein uS4</fullName>
    </recommendedName>
    <alternativeName>
        <fullName evidence="2">30S ribosomal protein S4</fullName>
    </alternativeName>
</protein>
<proteinExistence type="inferred from homology"/>
<comment type="function">
    <text evidence="1">One of the primary rRNA binding proteins, it binds directly to 16S rRNA where it nucleates assembly of the body of the 30S subunit.</text>
</comment>
<comment type="function">
    <text evidence="1">With S5 and S12 plays an important role in translational accuracy.</text>
</comment>
<comment type="subunit">
    <text evidence="1">Part of the 30S ribosomal subunit. Contacts protein S5. The interaction surface between S4 and S5 is involved in control of translational fidelity.</text>
</comment>
<comment type="similarity">
    <text evidence="1">Belongs to the universal ribosomal protein uS4 family.</text>
</comment>
<gene>
    <name evidence="1" type="primary">rpsD</name>
    <name type="ordered locus">MAV_4399</name>
</gene>
<sequence>MARYTGPVTRKSRRLRTDLVGGDQAFEKRPYPPGQHGRARIKESEYLLQLQEKQKARFTYGVMEKQFRRYYEEAVRQPGKTGEELLRILESRLDNVVYRAGLARTRRMARQLVTHGHFTVNGVRVDVPSYRVSQYDIIDVREQSLNSVPFQIARETAGDRPVPSWLQVVGERQRILIHQLPERAQIDVPLTEQLIVEFYSK</sequence>
<feature type="chain" id="PRO_0000293314" description="Small ribosomal subunit protein uS4">
    <location>
        <begin position="1"/>
        <end position="201"/>
    </location>
</feature>
<feature type="domain" description="S4 RNA-binding" evidence="1">
    <location>
        <begin position="91"/>
        <end position="157"/>
    </location>
</feature>
<organism>
    <name type="scientific">Mycobacterium avium (strain 104)</name>
    <dbReference type="NCBI Taxonomy" id="243243"/>
    <lineage>
        <taxon>Bacteria</taxon>
        <taxon>Bacillati</taxon>
        <taxon>Actinomycetota</taxon>
        <taxon>Actinomycetes</taxon>
        <taxon>Mycobacteriales</taxon>
        <taxon>Mycobacteriaceae</taxon>
        <taxon>Mycobacterium</taxon>
        <taxon>Mycobacterium avium complex (MAC)</taxon>
    </lineage>
</organism>
<keyword id="KW-0687">Ribonucleoprotein</keyword>
<keyword id="KW-0689">Ribosomal protein</keyword>
<keyword id="KW-0694">RNA-binding</keyword>
<keyword id="KW-0699">rRNA-binding</keyword>
<reference key="1">
    <citation type="submission" date="2006-10" db="EMBL/GenBank/DDBJ databases">
        <authorList>
            <person name="Fleischmann R.D."/>
            <person name="Dodson R.J."/>
            <person name="Haft D.H."/>
            <person name="Merkel J.S."/>
            <person name="Nelson W.C."/>
            <person name="Fraser C.M."/>
        </authorList>
    </citation>
    <scope>NUCLEOTIDE SEQUENCE [LARGE SCALE GENOMIC DNA]</scope>
    <source>
        <strain>104</strain>
    </source>
</reference>
<dbReference type="EMBL" id="CP000479">
    <property type="protein sequence ID" value="ABK66503.1"/>
    <property type="molecule type" value="Genomic_DNA"/>
</dbReference>
<dbReference type="RefSeq" id="WP_003873444.1">
    <property type="nucleotide sequence ID" value="NC_008595.1"/>
</dbReference>
<dbReference type="SMR" id="A0QKU6"/>
<dbReference type="GeneID" id="75271913"/>
<dbReference type="KEGG" id="mav:MAV_4399"/>
<dbReference type="HOGENOM" id="CLU_092403_0_2_11"/>
<dbReference type="Proteomes" id="UP000001574">
    <property type="component" value="Chromosome"/>
</dbReference>
<dbReference type="GO" id="GO:0015935">
    <property type="term" value="C:small ribosomal subunit"/>
    <property type="evidence" value="ECO:0007669"/>
    <property type="project" value="InterPro"/>
</dbReference>
<dbReference type="GO" id="GO:0019843">
    <property type="term" value="F:rRNA binding"/>
    <property type="evidence" value="ECO:0007669"/>
    <property type="project" value="UniProtKB-UniRule"/>
</dbReference>
<dbReference type="GO" id="GO:0003735">
    <property type="term" value="F:structural constituent of ribosome"/>
    <property type="evidence" value="ECO:0007669"/>
    <property type="project" value="InterPro"/>
</dbReference>
<dbReference type="GO" id="GO:0042274">
    <property type="term" value="P:ribosomal small subunit biogenesis"/>
    <property type="evidence" value="ECO:0007669"/>
    <property type="project" value="TreeGrafter"/>
</dbReference>
<dbReference type="GO" id="GO:0006412">
    <property type="term" value="P:translation"/>
    <property type="evidence" value="ECO:0007669"/>
    <property type="project" value="UniProtKB-UniRule"/>
</dbReference>
<dbReference type="CDD" id="cd00165">
    <property type="entry name" value="S4"/>
    <property type="match status" value="1"/>
</dbReference>
<dbReference type="FunFam" id="3.10.290.10:FF:000001">
    <property type="entry name" value="30S ribosomal protein S4"/>
    <property type="match status" value="1"/>
</dbReference>
<dbReference type="Gene3D" id="1.10.1050.10">
    <property type="entry name" value="Ribosomal Protein S4 Delta 41, Chain A, domain 1"/>
    <property type="match status" value="1"/>
</dbReference>
<dbReference type="Gene3D" id="3.10.290.10">
    <property type="entry name" value="RNA-binding S4 domain"/>
    <property type="match status" value="1"/>
</dbReference>
<dbReference type="HAMAP" id="MF_01306_B">
    <property type="entry name" value="Ribosomal_uS4_B"/>
    <property type="match status" value="1"/>
</dbReference>
<dbReference type="InterPro" id="IPR022801">
    <property type="entry name" value="Ribosomal_uS4"/>
</dbReference>
<dbReference type="InterPro" id="IPR005709">
    <property type="entry name" value="Ribosomal_uS4_bac-type"/>
</dbReference>
<dbReference type="InterPro" id="IPR018079">
    <property type="entry name" value="Ribosomal_uS4_CS"/>
</dbReference>
<dbReference type="InterPro" id="IPR001912">
    <property type="entry name" value="Ribosomal_uS4_N"/>
</dbReference>
<dbReference type="InterPro" id="IPR002942">
    <property type="entry name" value="S4_RNA-bd"/>
</dbReference>
<dbReference type="InterPro" id="IPR036986">
    <property type="entry name" value="S4_RNA-bd_sf"/>
</dbReference>
<dbReference type="NCBIfam" id="NF003717">
    <property type="entry name" value="PRK05327.1"/>
    <property type="match status" value="1"/>
</dbReference>
<dbReference type="NCBIfam" id="TIGR01017">
    <property type="entry name" value="rpsD_bact"/>
    <property type="match status" value="1"/>
</dbReference>
<dbReference type="PANTHER" id="PTHR11831">
    <property type="entry name" value="30S 40S RIBOSOMAL PROTEIN"/>
    <property type="match status" value="1"/>
</dbReference>
<dbReference type="PANTHER" id="PTHR11831:SF4">
    <property type="entry name" value="SMALL RIBOSOMAL SUBUNIT PROTEIN US4M"/>
    <property type="match status" value="1"/>
</dbReference>
<dbReference type="Pfam" id="PF00163">
    <property type="entry name" value="Ribosomal_S4"/>
    <property type="match status" value="1"/>
</dbReference>
<dbReference type="Pfam" id="PF01479">
    <property type="entry name" value="S4"/>
    <property type="match status" value="1"/>
</dbReference>
<dbReference type="SMART" id="SM01390">
    <property type="entry name" value="Ribosomal_S4"/>
    <property type="match status" value="1"/>
</dbReference>
<dbReference type="SMART" id="SM00363">
    <property type="entry name" value="S4"/>
    <property type="match status" value="1"/>
</dbReference>
<dbReference type="SUPFAM" id="SSF55174">
    <property type="entry name" value="Alpha-L RNA-binding motif"/>
    <property type="match status" value="1"/>
</dbReference>
<dbReference type="PROSITE" id="PS00632">
    <property type="entry name" value="RIBOSOMAL_S4"/>
    <property type="match status" value="1"/>
</dbReference>
<dbReference type="PROSITE" id="PS50889">
    <property type="entry name" value="S4"/>
    <property type="match status" value="1"/>
</dbReference>
<evidence type="ECO:0000255" key="1">
    <source>
        <dbReference type="HAMAP-Rule" id="MF_01306"/>
    </source>
</evidence>
<evidence type="ECO:0000305" key="2"/>
<name>RS4_MYCA1</name>